<sequence length="215" mass="24092">MNKDQSKIPQATAKRLPLYYRFLKNLHASGKQRVSSAELSDAVKVDSATIRRDFSYFGALGKKGYGYNVDYLLSFFRKTLDQDEMTDVILIGVGNLGTAFLHYNFTKNNNTKISMAFDINESKIGTEVGGVPVYNLDDLEQHVKDESVAILTVPAVAAQSITDRLVALGIKGILNFTPARLNVPEHIRIHHIDLAVELQSLVYFLKHYSVLEEIE</sequence>
<name>REX_BACSU</name>
<feature type="chain" id="PRO_0000097885" description="Redox-sensing transcriptional repressor Rex">
    <location>
        <begin position="1"/>
        <end position="215"/>
    </location>
</feature>
<feature type="DNA-binding region" description="H-T-H motif" evidence="1">
    <location>
        <begin position="18"/>
        <end position="57"/>
    </location>
</feature>
<feature type="binding site" evidence="1">
    <location>
        <begin position="92"/>
        <end position="97"/>
    </location>
    <ligand>
        <name>NAD(+)</name>
        <dbReference type="ChEBI" id="CHEBI:57540"/>
    </ligand>
</feature>
<feature type="helix" evidence="4">
    <location>
        <begin position="12"/>
        <end position="28"/>
    </location>
</feature>
<feature type="helix" evidence="4">
    <location>
        <begin position="36"/>
        <end position="43"/>
    </location>
</feature>
<feature type="helix" evidence="4">
    <location>
        <begin position="47"/>
        <end position="56"/>
    </location>
</feature>
<feature type="turn" evidence="4">
    <location>
        <begin position="63"/>
        <end position="65"/>
    </location>
</feature>
<feature type="helix" evidence="4">
    <location>
        <begin position="69"/>
        <end position="82"/>
    </location>
</feature>
<feature type="strand" evidence="4">
    <location>
        <begin position="88"/>
        <end position="91"/>
    </location>
</feature>
<feature type="helix" evidence="4">
    <location>
        <begin position="95"/>
        <end position="102"/>
    </location>
</feature>
<feature type="strand" evidence="4">
    <location>
        <begin position="107"/>
        <end position="109"/>
    </location>
</feature>
<feature type="strand" evidence="4">
    <location>
        <begin position="113"/>
        <end position="119"/>
    </location>
</feature>
<feature type="turn" evidence="4">
    <location>
        <begin position="121"/>
        <end position="125"/>
    </location>
</feature>
<feature type="strand" evidence="3">
    <location>
        <begin position="126"/>
        <end position="128"/>
    </location>
</feature>
<feature type="strand" evidence="4">
    <location>
        <begin position="131"/>
        <end position="135"/>
    </location>
</feature>
<feature type="helix" evidence="4">
    <location>
        <begin position="136"/>
        <end position="138"/>
    </location>
</feature>
<feature type="helix" evidence="4">
    <location>
        <begin position="139"/>
        <end position="142"/>
    </location>
</feature>
<feature type="strand" evidence="4">
    <location>
        <begin position="148"/>
        <end position="151"/>
    </location>
</feature>
<feature type="helix" evidence="4">
    <location>
        <begin position="155"/>
        <end position="167"/>
    </location>
</feature>
<feature type="strand" evidence="4">
    <location>
        <begin position="172"/>
        <end position="175"/>
    </location>
</feature>
<feature type="strand" evidence="4">
    <location>
        <begin position="187"/>
        <end position="191"/>
    </location>
</feature>
<feature type="helix" evidence="4">
    <location>
        <begin position="194"/>
        <end position="208"/>
    </location>
</feature>
<keyword id="KW-0002">3D-structure</keyword>
<keyword id="KW-0963">Cytoplasm</keyword>
<keyword id="KW-0238">DNA-binding</keyword>
<keyword id="KW-0520">NAD</keyword>
<keyword id="KW-1185">Reference proteome</keyword>
<keyword id="KW-0678">Repressor</keyword>
<keyword id="KW-0804">Transcription</keyword>
<keyword id="KW-0805">Transcription regulation</keyword>
<comment type="function">
    <text evidence="1">Modulates transcription in response to changes in cellular NADH/NAD(+) redox state.</text>
</comment>
<comment type="subunit">
    <text evidence="1">Homodimer.</text>
</comment>
<comment type="subcellular location">
    <subcellularLocation>
        <location evidence="2">Cytoplasm</location>
    </subcellularLocation>
</comment>
<comment type="similarity">
    <text evidence="1">Belongs to the transcriptional regulatory Rex family.</text>
</comment>
<dbReference type="EMBL" id="D88802">
    <property type="protein sequence ID" value="BAA19721.1"/>
    <property type="molecule type" value="Genomic_DNA"/>
</dbReference>
<dbReference type="EMBL" id="AL009126">
    <property type="protein sequence ID" value="CAB12416.1"/>
    <property type="molecule type" value="Genomic_DNA"/>
</dbReference>
<dbReference type="PIR" id="A69787">
    <property type="entry name" value="A69787"/>
</dbReference>
<dbReference type="RefSeq" id="NP_388478.1">
    <property type="nucleotide sequence ID" value="NC_000964.3"/>
</dbReference>
<dbReference type="RefSeq" id="WP_003234073.1">
    <property type="nucleotide sequence ID" value="NZ_OZ025638.1"/>
</dbReference>
<dbReference type="PDB" id="2VT2">
    <property type="method" value="X-ray"/>
    <property type="resolution" value="2.30 A"/>
    <property type="chains" value="A/B=1-215"/>
</dbReference>
<dbReference type="PDB" id="2VT3">
    <property type="method" value="X-ray"/>
    <property type="resolution" value="2.00 A"/>
    <property type="chains" value="A/B=1-215"/>
</dbReference>
<dbReference type="PDBsum" id="2VT2"/>
<dbReference type="PDBsum" id="2VT3"/>
<dbReference type="SMR" id="O05521"/>
<dbReference type="FunCoup" id="O05521">
    <property type="interactions" value="31"/>
</dbReference>
<dbReference type="STRING" id="224308.BSU05970"/>
<dbReference type="PaxDb" id="224308-BSU05970"/>
<dbReference type="EnsemblBacteria" id="CAB12416">
    <property type="protein sequence ID" value="CAB12416"/>
    <property type="gene ID" value="BSU_05970"/>
</dbReference>
<dbReference type="GeneID" id="939871"/>
<dbReference type="KEGG" id="bsu:BSU05970"/>
<dbReference type="PATRIC" id="fig|224308.179.peg.642"/>
<dbReference type="eggNOG" id="COG2344">
    <property type="taxonomic scope" value="Bacteria"/>
</dbReference>
<dbReference type="InParanoid" id="O05521"/>
<dbReference type="OrthoDB" id="9784760at2"/>
<dbReference type="PhylomeDB" id="O05521"/>
<dbReference type="BioCyc" id="BSUB:BSU05970-MONOMER"/>
<dbReference type="EvolutionaryTrace" id="O05521"/>
<dbReference type="PRO" id="PR:O05521"/>
<dbReference type="Proteomes" id="UP000001570">
    <property type="component" value="Chromosome"/>
</dbReference>
<dbReference type="GO" id="GO:0005737">
    <property type="term" value="C:cytoplasm"/>
    <property type="evidence" value="ECO:0007669"/>
    <property type="project" value="UniProtKB-SubCell"/>
</dbReference>
<dbReference type="GO" id="GO:0003677">
    <property type="term" value="F:DNA binding"/>
    <property type="evidence" value="ECO:0007669"/>
    <property type="project" value="UniProtKB-UniRule"/>
</dbReference>
<dbReference type="GO" id="GO:0003700">
    <property type="term" value="F:DNA-binding transcription factor activity"/>
    <property type="evidence" value="ECO:0007669"/>
    <property type="project" value="UniProtKB-UniRule"/>
</dbReference>
<dbReference type="GO" id="GO:0045892">
    <property type="term" value="P:negative regulation of DNA-templated transcription"/>
    <property type="evidence" value="ECO:0007669"/>
    <property type="project" value="InterPro"/>
</dbReference>
<dbReference type="GO" id="GO:0051775">
    <property type="term" value="P:response to redox state"/>
    <property type="evidence" value="ECO:0007669"/>
    <property type="project" value="InterPro"/>
</dbReference>
<dbReference type="Gene3D" id="3.40.50.720">
    <property type="entry name" value="NAD(P)-binding Rossmann-like Domain"/>
    <property type="match status" value="1"/>
</dbReference>
<dbReference type="Gene3D" id="1.10.10.10">
    <property type="entry name" value="Winged helix-like DNA-binding domain superfamily/Winged helix DNA-binding domain"/>
    <property type="match status" value="1"/>
</dbReference>
<dbReference type="HAMAP" id="MF_01131">
    <property type="entry name" value="Rex"/>
    <property type="match status" value="1"/>
</dbReference>
<dbReference type="InterPro" id="IPR003781">
    <property type="entry name" value="CoA-bd"/>
</dbReference>
<dbReference type="InterPro" id="IPR036291">
    <property type="entry name" value="NAD(P)-bd_dom_sf"/>
</dbReference>
<dbReference type="InterPro" id="IPR009718">
    <property type="entry name" value="Rex_DNA-bd_C_dom"/>
</dbReference>
<dbReference type="InterPro" id="IPR022876">
    <property type="entry name" value="Tscrpt_rep_Rex"/>
</dbReference>
<dbReference type="InterPro" id="IPR036388">
    <property type="entry name" value="WH-like_DNA-bd_sf"/>
</dbReference>
<dbReference type="InterPro" id="IPR036390">
    <property type="entry name" value="WH_DNA-bd_sf"/>
</dbReference>
<dbReference type="NCBIfam" id="NF003989">
    <property type="entry name" value="PRK05472.1-3"/>
    <property type="match status" value="1"/>
</dbReference>
<dbReference type="NCBIfam" id="NF003991">
    <property type="entry name" value="PRK05472.1-5"/>
    <property type="match status" value="1"/>
</dbReference>
<dbReference type="NCBIfam" id="NF003994">
    <property type="entry name" value="PRK05472.2-3"/>
    <property type="match status" value="1"/>
</dbReference>
<dbReference type="NCBIfam" id="NF003995">
    <property type="entry name" value="PRK05472.2-4"/>
    <property type="match status" value="1"/>
</dbReference>
<dbReference type="NCBIfam" id="NF003996">
    <property type="entry name" value="PRK05472.2-5"/>
    <property type="match status" value="1"/>
</dbReference>
<dbReference type="PANTHER" id="PTHR35786">
    <property type="entry name" value="REDOX-SENSING TRANSCRIPTIONAL REPRESSOR REX"/>
    <property type="match status" value="1"/>
</dbReference>
<dbReference type="PANTHER" id="PTHR35786:SF1">
    <property type="entry name" value="REDOX-SENSING TRANSCRIPTIONAL REPRESSOR REX 1"/>
    <property type="match status" value="1"/>
</dbReference>
<dbReference type="Pfam" id="PF02629">
    <property type="entry name" value="CoA_binding"/>
    <property type="match status" value="1"/>
</dbReference>
<dbReference type="Pfam" id="PF06971">
    <property type="entry name" value="Put_DNA-bind_N"/>
    <property type="match status" value="1"/>
</dbReference>
<dbReference type="SMART" id="SM00881">
    <property type="entry name" value="CoA_binding"/>
    <property type="match status" value="1"/>
</dbReference>
<dbReference type="SUPFAM" id="SSF51735">
    <property type="entry name" value="NAD(P)-binding Rossmann-fold domains"/>
    <property type="match status" value="1"/>
</dbReference>
<dbReference type="SUPFAM" id="SSF46785">
    <property type="entry name" value="Winged helix' DNA-binding domain"/>
    <property type="match status" value="1"/>
</dbReference>
<organism>
    <name type="scientific">Bacillus subtilis (strain 168)</name>
    <dbReference type="NCBI Taxonomy" id="224308"/>
    <lineage>
        <taxon>Bacteria</taxon>
        <taxon>Bacillati</taxon>
        <taxon>Bacillota</taxon>
        <taxon>Bacilli</taxon>
        <taxon>Bacillales</taxon>
        <taxon>Bacillaceae</taxon>
        <taxon>Bacillus</taxon>
    </lineage>
</organism>
<gene>
    <name evidence="1" type="primary">rex</name>
    <name type="synonym">ydiH</name>
    <name type="ordered locus">BSU05970</name>
</gene>
<accession>O05521</accession>
<proteinExistence type="evidence at protein level"/>
<reference key="1">
    <citation type="journal article" date="1997" name="Microbiology">
        <title>Nucleotide sequence and analysis of the phoB-rrnE-groESL region of the Bacillus subtilis chromosome.</title>
        <authorList>
            <person name="Sadaie Y."/>
            <person name="Yata K."/>
            <person name="Fujita M."/>
            <person name="Sagai H."/>
            <person name="Itaya M."/>
            <person name="Kasahara Y."/>
            <person name="Ogasawara N."/>
        </authorList>
    </citation>
    <scope>NUCLEOTIDE SEQUENCE [GENOMIC DNA]</scope>
    <source>
        <strain>168</strain>
    </source>
</reference>
<reference key="2">
    <citation type="journal article" date="1997" name="Nature">
        <title>The complete genome sequence of the Gram-positive bacterium Bacillus subtilis.</title>
        <authorList>
            <person name="Kunst F."/>
            <person name="Ogasawara N."/>
            <person name="Moszer I."/>
            <person name="Albertini A.M."/>
            <person name="Alloni G."/>
            <person name="Azevedo V."/>
            <person name="Bertero M.G."/>
            <person name="Bessieres P."/>
            <person name="Bolotin A."/>
            <person name="Borchert S."/>
            <person name="Borriss R."/>
            <person name="Boursier L."/>
            <person name="Brans A."/>
            <person name="Braun M."/>
            <person name="Brignell S.C."/>
            <person name="Bron S."/>
            <person name="Brouillet S."/>
            <person name="Bruschi C.V."/>
            <person name="Caldwell B."/>
            <person name="Capuano V."/>
            <person name="Carter N.M."/>
            <person name="Choi S.-K."/>
            <person name="Codani J.-J."/>
            <person name="Connerton I.F."/>
            <person name="Cummings N.J."/>
            <person name="Daniel R.A."/>
            <person name="Denizot F."/>
            <person name="Devine K.M."/>
            <person name="Duesterhoeft A."/>
            <person name="Ehrlich S.D."/>
            <person name="Emmerson P.T."/>
            <person name="Entian K.-D."/>
            <person name="Errington J."/>
            <person name="Fabret C."/>
            <person name="Ferrari E."/>
            <person name="Foulger D."/>
            <person name="Fritz C."/>
            <person name="Fujita M."/>
            <person name="Fujita Y."/>
            <person name="Fuma S."/>
            <person name="Galizzi A."/>
            <person name="Galleron N."/>
            <person name="Ghim S.-Y."/>
            <person name="Glaser P."/>
            <person name="Goffeau A."/>
            <person name="Golightly E.J."/>
            <person name="Grandi G."/>
            <person name="Guiseppi G."/>
            <person name="Guy B.J."/>
            <person name="Haga K."/>
            <person name="Haiech J."/>
            <person name="Harwood C.R."/>
            <person name="Henaut A."/>
            <person name="Hilbert H."/>
            <person name="Holsappel S."/>
            <person name="Hosono S."/>
            <person name="Hullo M.-F."/>
            <person name="Itaya M."/>
            <person name="Jones L.-M."/>
            <person name="Joris B."/>
            <person name="Karamata D."/>
            <person name="Kasahara Y."/>
            <person name="Klaerr-Blanchard M."/>
            <person name="Klein C."/>
            <person name="Kobayashi Y."/>
            <person name="Koetter P."/>
            <person name="Koningstein G."/>
            <person name="Krogh S."/>
            <person name="Kumano M."/>
            <person name="Kurita K."/>
            <person name="Lapidus A."/>
            <person name="Lardinois S."/>
            <person name="Lauber J."/>
            <person name="Lazarevic V."/>
            <person name="Lee S.-M."/>
            <person name="Levine A."/>
            <person name="Liu H."/>
            <person name="Masuda S."/>
            <person name="Mauel C."/>
            <person name="Medigue C."/>
            <person name="Medina N."/>
            <person name="Mellado R.P."/>
            <person name="Mizuno M."/>
            <person name="Moestl D."/>
            <person name="Nakai S."/>
            <person name="Noback M."/>
            <person name="Noone D."/>
            <person name="O'Reilly M."/>
            <person name="Ogawa K."/>
            <person name="Ogiwara A."/>
            <person name="Oudega B."/>
            <person name="Park S.-H."/>
            <person name="Parro V."/>
            <person name="Pohl T.M."/>
            <person name="Portetelle D."/>
            <person name="Porwollik S."/>
            <person name="Prescott A.M."/>
            <person name="Presecan E."/>
            <person name="Pujic P."/>
            <person name="Purnelle B."/>
            <person name="Rapoport G."/>
            <person name="Rey M."/>
            <person name="Reynolds S."/>
            <person name="Rieger M."/>
            <person name="Rivolta C."/>
            <person name="Rocha E."/>
            <person name="Roche B."/>
            <person name="Rose M."/>
            <person name="Sadaie Y."/>
            <person name="Sato T."/>
            <person name="Scanlan E."/>
            <person name="Schleich S."/>
            <person name="Schroeter R."/>
            <person name="Scoffone F."/>
            <person name="Sekiguchi J."/>
            <person name="Sekowska A."/>
            <person name="Seror S.J."/>
            <person name="Serror P."/>
            <person name="Shin B.-S."/>
            <person name="Soldo B."/>
            <person name="Sorokin A."/>
            <person name="Tacconi E."/>
            <person name="Takagi T."/>
            <person name="Takahashi H."/>
            <person name="Takemaru K."/>
            <person name="Takeuchi M."/>
            <person name="Tamakoshi A."/>
            <person name="Tanaka T."/>
            <person name="Terpstra P."/>
            <person name="Tognoni A."/>
            <person name="Tosato V."/>
            <person name="Uchiyama S."/>
            <person name="Vandenbol M."/>
            <person name="Vannier F."/>
            <person name="Vassarotti A."/>
            <person name="Viari A."/>
            <person name="Wambutt R."/>
            <person name="Wedler E."/>
            <person name="Wedler H."/>
            <person name="Weitzenegger T."/>
            <person name="Winters P."/>
            <person name="Wipat A."/>
            <person name="Yamamoto H."/>
            <person name="Yamane K."/>
            <person name="Yasumoto K."/>
            <person name="Yata K."/>
            <person name="Yoshida K."/>
            <person name="Yoshikawa H.-F."/>
            <person name="Zumstein E."/>
            <person name="Yoshikawa H."/>
            <person name="Danchin A."/>
        </authorList>
    </citation>
    <scope>NUCLEOTIDE SEQUENCE [LARGE SCALE GENOMIC DNA]</scope>
    <source>
        <strain>168</strain>
    </source>
</reference>
<evidence type="ECO:0000255" key="1">
    <source>
        <dbReference type="HAMAP-Rule" id="MF_01131"/>
    </source>
</evidence>
<evidence type="ECO:0000305" key="2"/>
<evidence type="ECO:0007829" key="3">
    <source>
        <dbReference type="PDB" id="2VT2"/>
    </source>
</evidence>
<evidence type="ECO:0007829" key="4">
    <source>
        <dbReference type="PDB" id="2VT3"/>
    </source>
</evidence>
<protein>
    <recommendedName>
        <fullName evidence="1">Redox-sensing transcriptional repressor Rex</fullName>
    </recommendedName>
</protein>